<reference evidence="5" key="1">
    <citation type="journal article" date="2009" name="BMC Evol. Biol.">
        <title>A proteomic approach for studying insect phylogeny: CAPA peptides of ancient insect taxa (Dictyoptera, Blattoptera) as a test case.</title>
        <authorList>
            <person name="Roth S."/>
            <person name="Fromm B."/>
            <person name="Gaede G."/>
            <person name="Predel R."/>
        </authorList>
    </citation>
    <scope>PROTEIN SEQUENCE</scope>
    <scope>AMIDATION AT LEU-17</scope>
    <source>
        <tissue evidence="3">Abdominal perisympathetic organs</tissue>
    </source>
</reference>
<sequence>GGGGSGETSGMWFGPRL</sequence>
<protein>
    <recommendedName>
        <fullName evidence="1">Pyrokinin-5</fullName>
    </recommendedName>
    <alternativeName>
        <fullName evidence="4">EurFl-Capa-PK</fullName>
    </alternativeName>
    <alternativeName>
        <fullName evidence="1">FXPRL-amide</fullName>
    </alternativeName>
</protein>
<comment type="function">
    <text evidence="1">Myoactive.</text>
</comment>
<comment type="subcellular location">
    <subcellularLocation>
        <location evidence="5">Secreted</location>
    </subcellularLocation>
</comment>
<comment type="similarity">
    <text evidence="2">Belongs to the pyrokinin family.</text>
</comment>
<accession>P85633</accession>
<keyword id="KW-0027">Amidation</keyword>
<keyword id="KW-0903">Direct protein sequencing</keyword>
<keyword id="KW-0527">Neuropeptide</keyword>
<keyword id="KW-0964">Secreted</keyword>
<dbReference type="GO" id="GO:0005576">
    <property type="term" value="C:extracellular region"/>
    <property type="evidence" value="ECO:0007669"/>
    <property type="project" value="UniProtKB-SubCell"/>
</dbReference>
<dbReference type="GO" id="GO:0005184">
    <property type="term" value="F:neuropeptide hormone activity"/>
    <property type="evidence" value="ECO:0007669"/>
    <property type="project" value="InterPro"/>
</dbReference>
<dbReference type="GO" id="GO:0007218">
    <property type="term" value="P:neuropeptide signaling pathway"/>
    <property type="evidence" value="ECO:0007669"/>
    <property type="project" value="UniProtKB-KW"/>
</dbReference>
<dbReference type="InterPro" id="IPR001484">
    <property type="entry name" value="Pyrokinin_CS"/>
</dbReference>
<dbReference type="PROSITE" id="PS00539">
    <property type="entry name" value="PYROKININ"/>
    <property type="match status" value="1"/>
</dbReference>
<evidence type="ECO:0000250" key="1">
    <source>
        <dbReference type="UniProtKB" id="P82617"/>
    </source>
</evidence>
<evidence type="ECO:0000255" key="2"/>
<evidence type="ECO:0000269" key="3">
    <source>
    </source>
</evidence>
<evidence type="ECO:0000303" key="4">
    <source>
    </source>
</evidence>
<evidence type="ECO:0000305" key="5"/>
<proteinExistence type="evidence at protein level"/>
<feature type="peptide" id="PRO_0000378694" description="Pyrokinin-5" evidence="3">
    <location>
        <begin position="1"/>
        <end position="17"/>
    </location>
</feature>
<feature type="modified residue" description="Leucine amide" evidence="3">
    <location>
        <position position="17"/>
    </location>
</feature>
<name>PPK5_EURFL</name>
<organism>
    <name type="scientific">Eurycotis floridana</name>
    <name type="common">Florida woods cockroach</name>
    <name type="synonym">Skunk roach</name>
    <dbReference type="NCBI Taxonomy" id="303877"/>
    <lineage>
        <taxon>Eukaryota</taxon>
        <taxon>Metazoa</taxon>
        <taxon>Ecdysozoa</taxon>
        <taxon>Arthropoda</taxon>
        <taxon>Hexapoda</taxon>
        <taxon>Insecta</taxon>
        <taxon>Pterygota</taxon>
        <taxon>Neoptera</taxon>
        <taxon>Polyneoptera</taxon>
        <taxon>Dictyoptera</taxon>
        <taxon>Blattodea</taxon>
        <taxon>Blattoidea</taxon>
        <taxon>Blattidae</taxon>
        <taxon>Eurycotiinae</taxon>
        <taxon>Eurycotis</taxon>
    </lineage>
</organism>